<gene>
    <name evidence="1" type="primary">leuC</name>
    <name type="ordered locus">YPDSF_3108</name>
</gene>
<sequence length="476" mass="50589">MGTTSSQSKTLYQKLYDAHIVHEAPNETPLLYIDRHLVHEVTSPQAFDGLRAMGRPVRQPGKTFATMDHNVSTQTKDINASGEMARIQMQELIKNCAEFGVSLYDLNHPFQGIVHVIGPEQGMTLPGMTIVCGDSHTATHGAFGSLAFGIGTSEVEHVLATQTLKQGRAKTMRIEVNGTVGAGITAKDIVLAIIGKTGSAGGTGHVVEFCGSAIEALSMEGRMTLCNMAIEMGAKAGLVAPDDTTFAYLKGRQFAPTGEQWEQGVAYWRTLKSDADAQFDTIVTLDAADIAPQVTWGTNPGQVIAVNQIIPAPESFSDPVERASAEKALAYMDLRPGIKLTEVAIDKVFIGSCTNSRIEDLRAAAAIAQGRKVAKGVQAIVVPGSGPVKAQAEAEGLDKIFIAAGFEWRLPGCSMCLAMNNDRLEPGERCASTSNRNFEGRQGRGGRTHLVSPAMAAAAAVSGHFADVRELSATTH</sequence>
<proteinExistence type="inferred from homology"/>
<keyword id="KW-0004">4Fe-4S</keyword>
<keyword id="KW-0028">Amino-acid biosynthesis</keyword>
<keyword id="KW-0100">Branched-chain amino acid biosynthesis</keyword>
<keyword id="KW-0408">Iron</keyword>
<keyword id="KW-0411">Iron-sulfur</keyword>
<keyword id="KW-0432">Leucine biosynthesis</keyword>
<keyword id="KW-0456">Lyase</keyword>
<keyword id="KW-0479">Metal-binding</keyword>
<accession>A4TQA4</accession>
<comment type="function">
    <text evidence="1">Catalyzes the isomerization between 2-isopropylmalate and 3-isopropylmalate, via the formation of 2-isopropylmaleate.</text>
</comment>
<comment type="catalytic activity">
    <reaction evidence="1">
        <text>(2R,3S)-3-isopropylmalate = (2S)-2-isopropylmalate</text>
        <dbReference type="Rhea" id="RHEA:32287"/>
        <dbReference type="ChEBI" id="CHEBI:1178"/>
        <dbReference type="ChEBI" id="CHEBI:35121"/>
        <dbReference type="EC" id="4.2.1.33"/>
    </reaction>
</comment>
<comment type="cofactor">
    <cofactor evidence="1">
        <name>[4Fe-4S] cluster</name>
        <dbReference type="ChEBI" id="CHEBI:49883"/>
    </cofactor>
    <text evidence="1">Binds 1 [4Fe-4S] cluster per subunit.</text>
</comment>
<comment type="pathway">
    <text evidence="1">Amino-acid biosynthesis; L-leucine biosynthesis; L-leucine from 3-methyl-2-oxobutanoate: step 2/4.</text>
</comment>
<comment type="subunit">
    <text evidence="1">Heterodimer of LeuC and LeuD.</text>
</comment>
<comment type="similarity">
    <text evidence="1">Belongs to the aconitase/IPM isomerase family. LeuC type 1 subfamily.</text>
</comment>
<protein>
    <recommendedName>
        <fullName evidence="1">3-isopropylmalate dehydratase large subunit</fullName>
        <ecNumber evidence="1">4.2.1.33</ecNumber>
    </recommendedName>
    <alternativeName>
        <fullName evidence="1">Alpha-IPM isomerase</fullName>
        <shortName evidence="1">IPMI</shortName>
    </alternativeName>
    <alternativeName>
        <fullName evidence="1">Isopropylmalate isomerase</fullName>
    </alternativeName>
</protein>
<evidence type="ECO:0000255" key="1">
    <source>
        <dbReference type="HAMAP-Rule" id="MF_01026"/>
    </source>
</evidence>
<feature type="chain" id="PRO_1000063637" description="3-isopropylmalate dehydratase large subunit">
    <location>
        <begin position="1"/>
        <end position="476"/>
    </location>
</feature>
<feature type="binding site" evidence="1">
    <location>
        <position position="353"/>
    </location>
    <ligand>
        <name>[4Fe-4S] cluster</name>
        <dbReference type="ChEBI" id="CHEBI:49883"/>
    </ligand>
</feature>
<feature type="binding site" evidence="1">
    <location>
        <position position="413"/>
    </location>
    <ligand>
        <name>[4Fe-4S] cluster</name>
        <dbReference type="ChEBI" id="CHEBI:49883"/>
    </ligand>
</feature>
<feature type="binding site" evidence="1">
    <location>
        <position position="416"/>
    </location>
    <ligand>
        <name>[4Fe-4S] cluster</name>
        <dbReference type="ChEBI" id="CHEBI:49883"/>
    </ligand>
</feature>
<organism>
    <name type="scientific">Yersinia pestis (strain Pestoides F)</name>
    <dbReference type="NCBI Taxonomy" id="386656"/>
    <lineage>
        <taxon>Bacteria</taxon>
        <taxon>Pseudomonadati</taxon>
        <taxon>Pseudomonadota</taxon>
        <taxon>Gammaproteobacteria</taxon>
        <taxon>Enterobacterales</taxon>
        <taxon>Yersiniaceae</taxon>
        <taxon>Yersinia</taxon>
    </lineage>
</organism>
<reference key="1">
    <citation type="submission" date="2007-02" db="EMBL/GenBank/DDBJ databases">
        <title>Complete sequence of chromosome of Yersinia pestis Pestoides F.</title>
        <authorList>
            <consortium name="US DOE Joint Genome Institute"/>
            <person name="Copeland A."/>
            <person name="Lucas S."/>
            <person name="Lapidus A."/>
            <person name="Barry K."/>
            <person name="Detter J.C."/>
            <person name="Glavina del Rio T."/>
            <person name="Hammon N."/>
            <person name="Israni S."/>
            <person name="Dalin E."/>
            <person name="Tice H."/>
            <person name="Pitluck S."/>
            <person name="Di Bartolo G."/>
            <person name="Chain P."/>
            <person name="Malfatti S."/>
            <person name="Shin M."/>
            <person name="Vergez L."/>
            <person name="Schmutz J."/>
            <person name="Larimer F."/>
            <person name="Land M."/>
            <person name="Hauser L."/>
            <person name="Worsham P."/>
            <person name="Chu M."/>
            <person name="Bearden S."/>
            <person name="Garcia E."/>
            <person name="Richardson P."/>
        </authorList>
    </citation>
    <scope>NUCLEOTIDE SEQUENCE [LARGE SCALE GENOMIC DNA]</scope>
    <source>
        <strain>Pestoides F</strain>
    </source>
</reference>
<name>LEUC_YERPP</name>
<dbReference type="EC" id="4.2.1.33" evidence="1"/>
<dbReference type="EMBL" id="CP000668">
    <property type="protein sequence ID" value="ABP41466.1"/>
    <property type="molecule type" value="Genomic_DNA"/>
</dbReference>
<dbReference type="RefSeq" id="WP_002210455.1">
    <property type="nucleotide sequence ID" value="NZ_CP009715.1"/>
</dbReference>
<dbReference type="SMR" id="A4TQA4"/>
<dbReference type="GeneID" id="57974081"/>
<dbReference type="KEGG" id="ypp:YPDSF_3108"/>
<dbReference type="PATRIC" id="fig|386656.14.peg.1250"/>
<dbReference type="UniPathway" id="UPA00048">
    <property type="reaction ID" value="UER00071"/>
</dbReference>
<dbReference type="GO" id="GO:0003861">
    <property type="term" value="F:3-isopropylmalate dehydratase activity"/>
    <property type="evidence" value="ECO:0007669"/>
    <property type="project" value="UniProtKB-UniRule"/>
</dbReference>
<dbReference type="GO" id="GO:0051539">
    <property type="term" value="F:4 iron, 4 sulfur cluster binding"/>
    <property type="evidence" value="ECO:0007669"/>
    <property type="project" value="UniProtKB-KW"/>
</dbReference>
<dbReference type="GO" id="GO:0046872">
    <property type="term" value="F:metal ion binding"/>
    <property type="evidence" value="ECO:0007669"/>
    <property type="project" value="UniProtKB-KW"/>
</dbReference>
<dbReference type="GO" id="GO:0009098">
    <property type="term" value="P:L-leucine biosynthetic process"/>
    <property type="evidence" value="ECO:0007669"/>
    <property type="project" value="UniProtKB-UniRule"/>
</dbReference>
<dbReference type="CDD" id="cd01583">
    <property type="entry name" value="IPMI"/>
    <property type="match status" value="1"/>
</dbReference>
<dbReference type="FunFam" id="3.30.499.10:FF:000006">
    <property type="entry name" value="3-isopropylmalate dehydratase large subunit"/>
    <property type="match status" value="1"/>
</dbReference>
<dbReference type="FunFam" id="3.30.499.10:FF:000007">
    <property type="entry name" value="3-isopropylmalate dehydratase large subunit"/>
    <property type="match status" value="1"/>
</dbReference>
<dbReference type="Gene3D" id="3.30.499.10">
    <property type="entry name" value="Aconitase, domain 3"/>
    <property type="match status" value="2"/>
</dbReference>
<dbReference type="HAMAP" id="MF_01026">
    <property type="entry name" value="LeuC_type1"/>
    <property type="match status" value="1"/>
</dbReference>
<dbReference type="InterPro" id="IPR004430">
    <property type="entry name" value="3-IsopropMal_deHydase_lsu"/>
</dbReference>
<dbReference type="InterPro" id="IPR015931">
    <property type="entry name" value="Acnase/IPM_dHydase_lsu_aba_1/3"/>
</dbReference>
<dbReference type="InterPro" id="IPR001030">
    <property type="entry name" value="Acoase/IPM_deHydtase_lsu_aba"/>
</dbReference>
<dbReference type="InterPro" id="IPR018136">
    <property type="entry name" value="Aconitase_4Fe-4S_BS"/>
</dbReference>
<dbReference type="InterPro" id="IPR036008">
    <property type="entry name" value="Aconitase_4Fe-4S_dom"/>
</dbReference>
<dbReference type="InterPro" id="IPR050067">
    <property type="entry name" value="IPM_dehydratase_rel_enz"/>
</dbReference>
<dbReference type="InterPro" id="IPR033941">
    <property type="entry name" value="IPMI_cat"/>
</dbReference>
<dbReference type="NCBIfam" id="TIGR00170">
    <property type="entry name" value="leuC"/>
    <property type="match status" value="1"/>
</dbReference>
<dbReference type="NCBIfam" id="NF004016">
    <property type="entry name" value="PRK05478.1"/>
    <property type="match status" value="1"/>
</dbReference>
<dbReference type="NCBIfam" id="NF009116">
    <property type="entry name" value="PRK12466.1"/>
    <property type="match status" value="1"/>
</dbReference>
<dbReference type="PANTHER" id="PTHR43822:SF9">
    <property type="entry name" value="3-ISOPROPYLMALATE DEHYDRATASE"/>
    <property type="match status" value="1"/>
</dbReference>
<dbReference type="PANTHER" id="PTHR43822">
    <property type="entry name" value="HOMOACONITASE, MITOCHONDRIAL-RELATED"/>
    <property type="match status" value="1"/>
</dbReference>
<dbReference type="Pfam" id="PF00330">
    <property type="entry name" value="Aconitase"/>
    <property type="match status" value="1"/>
</dbReference>
<dbReference type="PRINTS" id="PR00415">
    <property type="entry name" value="ACONITASE"/>
</dbReference>
<dbReference type="SUPFAM" id="SSF53732">
    <property type="entry name" value="Aconitase iron-sulfur domain"/>
    <property type="match status" value="1"/>
</dbReference>
<dbReference type="PROSITE" id="PS00450">
    <property type="entry name" value="ACONITASE_1"/>
    <property type="match status" value="1"/>
</dbReference>
<dbReference type="PROSITE" id="PS01244">
    <property type="entry name" value="ACONITASE_2"/>
    <property type="match status" value="1"/>
</dbReference>